<name>DPCKG_METM5</name>
<sequence>MYLLNDKVAHELKKPFGKVYKELPSIEGKVVSIGDVTTKHLLSNGIIPNLSILDFKTKRNIPVNIPHKFKTIFEVENPQGCISDEAIERIKYLSTIHDRDMALIIKGEEDLLTIPVIKYFPEDTSVIYGQPDEGMVLLKITDELKQKIEKLLKDMEER</sequence>
<dbReference type="EC" id="2.7.1.237" evidence="1"/>
<dbReference type="EMBL" id="CP000609">
    <property type="protein sequence ID" value="ABO35493.1"/>
    <property type="molecule type" value="Genomic_DNA"/>
</dbReference>
<dbReference type="RefSeq" id="WP_011868946.1">
    <property type="nucleotide sequence ID" value="NC_009135.1"/>
</dbReference>
<dbReference type="SMR" id="A4FZ59"/>
<dbReference type="STRING" id="402880.MmarC5_1195"/>
<dbReference type="GeneID" id="4928872"/>
<dbReference type="KEGG" id="mmq:MmarC5_1195"/>
<dbReference type="eggNOG" id="arCOG04076">
    <property type="taxonomic scope" value="Archaea"/>
</dbReference>
<dbReference type="HOGENOM" id="CLU_120795_1_0_2"/>
<dbReference type="OrthoDB" id="15447at2157"/>
<dbReference type="UniPathway" id="UPA00241"/>
<dbReference type="Proteomes" id="UP000000253">
    <property type="component" value="Chromosome"/>
</dbReference>
<dbReference type="GO" id="GO:0005525">
    <property type="term" value="F:GTP binding"/>
    <property type="evidence" value="ECO:0007669"/>
    <property type="project" value="UniProtKB-UniRule"/>
</dbReference>
<dbReference type="GO" id="GO:0016301">
    <property type="term" value="F:kinase activity"/>
    <property type="evidence" value="ECO:0007669"/>
    <property type="project" value="UniProtKB-UniRule"/>
</dbReference>
<dbReference type="GO" id="GO:0015937">
    <property type="term" value="P:coenzyme A biosynthetic process"/>
    <property type="evidence" value="ECO:0007669"/>
    <property type="project" value="UniProtKB-UniRule"/>
</dbReference>
<dbReference type="HAMAP" id="MF_00590">
    <property type="entry name" value="Dephospho_CoA_kinase_GTP_dep"/>
    <property type="match status" value="1"/>
</dbReference>
<dbReference type="InterPro" id="IPR007164">
    <property type="entry name" value="GTP-dep_dephospho-CoA_kin"/>
</dbReference>
<dbReference type="PANTHER" id="PTHR40732:SF1">
    <property type="entry name" value="GTP-DEPENDENT DEPHOSPHO-COA KINASE"/>
    <property type="match status" value="1"/>
</dbReference>
<dbReference type="PANTHER" id="PTHR40732">
    <property type="entry name" value="UPF0218 PROTEIN TK1697"/>
    <property type="match status" value="1"/>
</dbReference>
<dbReference type="Pfam" id="PF04019">
    <property type="entry name" value="DUF359"/>
    <property type="match status" value="1"/>
</dbReference>
<dbReference type="PIRSF" id="PIRSF006533">
    <property type="entry name" value="UCP006533"/>
    <property type="match status" value="1"/>
</dbReference>
<keyword id="KW-0173">Coenzyme A biosynthesis</keyword>
<keyword id="KW-0342">GTP-binding</keyword>
<keyword id="KW-0418">Kinase</keyword>
<keyword id="KW-0547">Nucleotide-binding</keyword>
<keyword id="KW-0808">Transferase</keyword>
<accession>A4FZ59</accession>
<protein>
    <recommendedName>
        <fullName evidence="1">GTP-dependent dephospho-CoA kinase</fullName>
        <ecNumber evidence="1">2.7.1.237</ecNumber>
    </recommendedName>
    <alternativeName>
        <fullName evidence="1">Dephospho-coenzyme A kinase</fullName>
        <shortName evidence="1">DPCK</shortName>
    </alternativeName>
</protein>
<proteinExistence type="inferred from homology"/>
<evidence type="ECO:0000255" key="1">
    <source>
        <dbReference type="HAMAP-Rule" id="MF_00590"/>
    </source>
</evidence>
<comment type="function">
    <text evidence="1">Catalyzes the GTP-dependent phosphorylation of the 3'-hydroxyl group of dephosphocoenzyme A to form coenzyme A (CoA).</text>
</comment>
<comment type="catalytic activity">
    <reaction evidence="1">
        <text>3'-dephospho-CoA + GTP = GDP + CoA + H(+)</text>
        <dbReference type="Rhea" id="RHEA:61156"/>
        <dbReference type="ChEBI" id="CHEBI:15378"/>
        <dbReference type="ChEBI" id="CHEBI:37565"/>
        <dbReference type="ChEBI" id="CHEBI:57287"/>
        <dbReference type="ChEBI" id="CHEBI:57328"/>
        <dbReference type="ChEBI" id="CHEBI:58189"/>
        <dbReference type="EC" id="2.7.1.237"/>
    </reaction>
</comment>
<comment type="pathway">
    <text evidence="1">Cofactor biosynthesis; coenzyme A biosynthesis.</text>
</comment>
<comment type="similarity">
    <text evidence="1">Belongs to the GTP-dependent DPCK family.</text>
</comment>
<organism>
    <name type="scientific">Methanococcus maripaludis (strain C5 / ATCC BAA-1333)</name>
    <dbReference type="NCBI Taxonomy" id="402880"/>
    <lineage>
        <taxon>Archaea</taxon>
        <taxon>Methanobacteriati</taxon>
        <taxon>Methanobacteriota</taxon>
        <taxon>Methanomada group</taxon>
        <taxon>Methanococci</taxon>
        <taxon>Methanococcales</taxon>
        <taxon>Methanococcaceae</taxon>
        <taxon>Methanococcus</taxon>
    </lineage>
</organism>
<reference key="1">
    <citation type="submission" date="2007-03" db="EMBL/GenBank/DDBJ databases">
        <title>Complete sequence of chromosome of Methanococcus maripaludis C5.</title>
        <authorList>
            <consortium name="US DOE Joint Genome Institute"/>
            <person name="Copeland A."/>
            <person name="Lucas S."/>
            <person name="Lapidus A."/>
            <person name="Barry K."/>
            <person name="Glavina del Rio T."/>
            <person name="Dalin E."/>
            <person name="Tice H."/>
            <person name="Pitluck S."/>
            <person name="Chertkov O."/>
            <person name="Brettin T."/>
            <person name="Bruce D."/>
            <person name="Han C."/>
            <person name="Detter J.C."/>
            <person name="Schmutz J."/>
            <person name="Larimer F."/>
            <person name="Land M."/>
            <person name="Hauser L."/>
            <person name="Kyrpides N."/>
            <person name="Mikhailova N."/>
            <person name="Sieprawska-Lupa M."/>
            <person name="Whitman W.B."/>
            <person name="Richardson P."/>
        </authorList>
    </citation>
    <scope>NUCLEOTIDE SEQUENCE [LARGE SCALE GENOMIC DNA]</scope>
    <source>
        <strain>C5 / ATCC BAA-1333</strain>
    </source>
</reference>
<feature type="chain" id="PRO_1000025490" description="GTP-dependent dephospho-CoA kinase">
    <location>
        <begin position="1"/>
        <end position="158"/>
    </location>
</feature>
<feature type="binding site" evidence="1">
    <location>
        <position position="35"/>
    </location>
    <ligand>
        <name>GTP</name>
        <dbReference type="ChEBI" id="CHEBI:37565"/>
    </ligand>
</feature>
<feature type="binding site" evidence="1">
    <location>
        <position position="36"/>
    </location>
    <ligand>
        <name>GTP</name>
        <dbReference type="ChEBI" id="CHEBI:37565"/>
    </ligand>
</feature>
<feature type="binding site" evidence="1">
    <location>
        <position position="54"/>
    </location>
    <ligand>
        <name>GTP</name>
        <dbReference type="ChEBI" id="CHEBI:37565"/>
    </ligand>
</feature>
<feature type="binding site" evidence="1">
    <location>
        <position position="56"/>
    </location>
    <ligand>
        <name>GTP</name>
        <dbReference type="ChEBI" id="CHEBI:37565"/>
    </ligand>
</feature>
<feature type="binding site" evidence="1">
    <location>
        <position position="109"/>
    </location>
    <ligand>
        <name>GTP</name>
        <dbReference type="ChEBI" id="CHEBI:37565"/>
    </ligand>
</feature>
<feature type="binding site" evidence="1">
    <location>
        <position position="132"/>
    </location>
    <ligand>
        <name>GTP</name>
        <dbReference type="ChEBI" id="CHEBI:37565"/>
    </ligand>
</feature>
<gene>
    <name type="ordered locus">MmarC5_1195</name>
</gene>